<dbReference type="EMBL" id="U34345">
    <property type="protein sequence ID" value="AAC49134.1"/>
    <property type="molecule type" value="mRNA"/>
</dbReference>
<dbReference type="PIR" id="T08067">
    <property type="entry name" value="T08067"/>
</dbReference>
<dbReference type="RefSeq" id="XP_001690249.1">
    <property type="nucleotide sequence ID" value="XM_001690197.2"/>
</dbReference>
<dbReference type="PDB" id="7KZM">
    <property type="method" value="EM"/>
    <property type="resolution" value="7.50 A"/>
    <property type="chains" value="G=1-159"/>
</dbReference>
<dbReference type="PDB" id="7KZN">
    <property type="method" value="EM"/>
    <property type="resolution" value="4.00 A"/>
    <property type="chains" value="G=1-159"/>
</dbReference>
<dbReference type="PDB" id="8GLV">
    <property type="method" value="EM"/>
    <property type="resolution" value="3.10 A"/>
    <property type="chains" value="BC/BD/GL/K2/Lt=1-159"/>
</dbReference>
<dbReference type="PDBsum" id="7KZM"/>
<dbReference type="PDBsum" id="7KZN"/>
<dbReference type="PDBsum" id="8GLV"/>
<dbReference type="EMDB" id="EMD-23082"/>
<dbReference type="EMDB" id="EMD-23083"/>
<dbReference type="EMDB" id="EMD-40220"/>
<dbReference type="SMR" id="Q39584"/>
<dbReference type="PaxDb" id="3055-EDP09987"/>
<dbReference type="EnsemblPlants" id="PNW88936">
    <property type="protein sequence ID" value="PNW88936"/>
    <property type="gene ID" value="CHLRE_01g051250v5"/>
</dbReference>
<dbReference type="GeneID" id="5715753"/>
<dbReference type="Gramene" id="PNW88936">
    <property type="protein sequence ID" value="PNW88936"/>
    <property type="gene ID" value="CHLRE_01g051250v5"/>
</dbReference>
<dbReference type="KEGG" id="cre:CHLRE_01g051250v5"/>
<dbReference type="eggNOG" id="KOG0027">
    <property type="taxonomic scope" value="Eukaryota"/>
</dbReference>
<dbReference type="HOGENOM" id="CLU_061288_2_0_1"/>
<dbReference type="OMA" id="DMWRIRE"/>
<dbReference type="OrthoDB" id="26525at2759"/>
<dbReference type="GO" id="GO:0030286">
    <property type="term" value="C:dynein complex"/>
    <property type="evidence" value="ECO:0007669"/>
    <property type="project" value="UniProtKB-KW"/>
</dbReference>
<dbReference type="GO" id="GO:0005874">
    <property type="term" value="C:microtubule"/>
    <property type="evidence" value="ECO:0007669"/>
    <property type="project" value="UniProtKB-KW"/>
</dbReference>
<dbReference type="GO" id="GO:0031514">
    <property type="term" value="C:motile cilium"/>
    <property type="evidence" value="ECO:0007669"/>
    <property type="project" value="UniProtKB-SubCell"/>
</dbReference>
<dbReference type="GO" id="GO:0005509">
    <property type="term" value="F:calcium ion binding"/>
    <property type="evidence" value="ECO:0007669"/>
    <property type="project" value="InterPro"/>
</dbReference>
<dbReference type="CDD" id="cd00051">
    <property type="entry name" value="EFh"/>
    <property type="match status" value="1"/>
</dbReference>
<dbReference type="FunFam" id="1.10.238.10:FF:000178">
    <property type="entry name" value="Calmodulin-2 A"/>
    <property type="match status" value="1"/>
</dbReference>
<dbReference type="Gene3D" id="1.10.238.10">
    <property type="entry name" value="EF-hand"/>
    <property type="match status" value="2"/>
</dbReference>
<dbReference type="InterPro" id="IPR050230">
    <property type="entry name" value="CALM/Myosin/TropC-like"/>
</dbReference>
<dbReference type="InterPro" id="IPR011992">
    <property type="entry name" value="EF-hand-dom_pair"/>
</dbReference>
<dbReference type="InterPro" id="IPR018247">
    <property type="entry name" value="EF_Hand_1_Ca_BS"/>
</dbReference>
<dbReference type="InterPro" id="IPR002048">
    <property type="entry name" value="EF_hand_dom"/>
</dbReference>
<dbReference type="PANTHER" id="PTHR23048:SF0">
    <property type="entry name" value="CALMODULIN LIKE 3"/>
    <property type="match status" value="1"/>
</dbReference>
<dbReference type="PANTHER" id="PTHR23048">
    <property type="entry name" value="MYOSIN LIGHT CHAIN 1, 3"/>
    <property type="match status" value="1"/>
</dbReference>
<dbReference type="Pfam" id="PF13499">
    <property type="entry name" value="EF-hand_7"/>
    <property type="match status" value="1"/>
</dbReference>
<dbReference type="SMART" id="SM00054">
    <property type="entry name" value="EFh"/>
    <property type="match status" value="3"/>
</dbReference>
<dbReference type="SUPFAM" id="SSF47473">
    <property type="entry name" value="EF-hand"/>
    <property type="match status" value="1"/>
</dbReference>
<dbReference type="PROSITE" id="PS00018">
    <property type="entry name" value="EF_HAND_1"/>
    <property type="match status" value="2"/>
</dbReference>
<dbReference type="PROSITE" id="PS50222">
    <property type="entry name" value="EF_HAND_2"/>
    <property type="match status" value="3"/>
</dbReference>
<comment type="function">
    <text>May be involved in the calcium-mediated regulation of dynein motor function. Binds 1 mole of calcium.</text>
</comment>
<comment type="subunit">
    <text>Consists of at least 3 heavy chains (alpha, beta and gamma), 2 intermediate chains and 8 light chains.</text>
</comment>
<comment type="subcellular location">
    <subcellularLocation>
        <location>Cell projection</location>
        <location>Cilium</location>
        <location>Flagellum</location>
    </subcellularLocation>
</comment>
<proteinExistence type="evidence at protein level"/>
<feature type="chain" id="PRO_0000073679" description="Dynein 18 kDa light chain, flagellar outer arm">
    <location>
        <begin position="1"/>
        <end position="159"/>
    </location>
</feature>
<feature type="domain" description="EF-hand 1" evidence="1">
    <location>
        <begin position="18"/>
        <end position="53"/>
    </location>
</feature>
<feature type="domain" description="EF-hand 2" evidence="1">
    <location>
        <begin position="54"/>
        <end position="89"/>
    </location>
</feature>
<feature type="domain" description="EF-hand 3" evidence="1">
    <location>
        <begin position="129"/>
        <end position="159"/>
    </location>
</feature>
<feature type="binding site" evidence="1">
    <location>
        <position position="31"/>
    </location>
    <ligand>
        <name>Ca(2+)</name>
        <dbReference type="ChEBI" id="CHEBI:29108"/>
        <label>1</label>
    </ligand>
</feature>
<feature type="binding site" evidence="1">
    <location>
        <position position="33"/>
    </location>
    <ligand>
        <name>Ca(2+)</name>
        <dbReference type="ChEBI" id="CHEBI:29108"/>
        <label>1</label>
    </ligand>
</feature>
<feature type="binding site" evidence="1">
    <location>
        <position position="35"/>
    </location>
    <ligand>
        <name>Ca(2+)</name>
        <dbReference type="ChEBI" id="CHEBI:29108"/>
        <label>1</label>
    </ligand>
</feature>
<feature type="binding site" evidence="1">
    <location>
        <position position="37"/>
    </location>
    <ligand>
        <name>Ca(2+)</name>
        <dbReference type="ChEBI" id="CHEBI:29108"/>
        <label>1</label>
    </ligand>
</feature>
<feature type="binding site" evidence="1">
    <location>
        <position position="42"/>
    </location>
    <ligand>
        <name>Ca(2+)</name>
        <dbReference type="ChEBI" id="CHEBI:29108"/>
        <label>1</label>
    </ligand>
</feature>
<feature type="binding site" evidence="1">
    <location>
        <position position="67"/>
    </location>
    <ligand>
        <name>Ca(2+)</name>
        <dbReference type="ChEBI" id="CHEBI:29108"/>
        <label>2</label>
    </ligand>
</feature>
<feature type="binding site" evidence="1">
    <location>
        <position position="69"/>
    </location>
    <ligand>
        <name>Ca(2+)</name>
        <dbReference type="ChEBI" id="CHEBI:29108"/>
        <label>2</label>
    </ligand>
</feature>
<feature type="binding site" evidence="1">
    <location>
        <position position="71"/>
    </location>
    <ligand>
        <name>Ca(2+)</name>
        <dbReference type="ChEBI" id="CHEBI:29108"/>
        <label>2</label>
    </ligand>
</feature>
<feature type="binding site" evidence="1">
    <location>
        <position position="73"/>
    </location>
    <ligand>
        <name>Ca(2+)</name>
        <dbReference type="ChEBI" id="CHEBI:29108"/>
        <label>2</label>
    </ligand>
</feature>
<feature type="binding site" evidence="1">
    <location>
        <position position="78"/>
    </location>
    <ligand>
        <name>Ca(2+)</name>
        <dbReference type="ChEBI" id="CHEBI:29108"/>
        <label>2</label>
    </ligand>
</feature>
<organism>
    <name type="scientific">Chlamydomonas reinhardtii</name>
    <name type="common">Chlamydomonas smithii</name>
    <dbReference type="NCBI Taxonomy" id="3055"/>
    <lineage>
        <taxon>Eukaryota</taxon>
        <taxon>Viridiplantae</taxon>
        <taxon>Chlorophyta</taxon>
        <taxon>core chlorophytes</taxon>
        <taxon>Chlorophyceae</taxon>
        <taxon>CS clade</taxon>
        <taxon>Chlamydomonadales</taxon>
        <taxon>Chlamydomonadaceae</taxon>
        <taxon>Chlamydomonas</taxon>
    </lineage>
</organism>
<reference key="1">
    <citation type="journal article" date="1995" name="J. Cell Sci.">
        <title>Identification of a Ca(2+)-binding light chain within Chlamydomonas outer arm dynein.</title>
        <authorList>
            <person name="King S.M."/>
            <person name="Patel-King R.S."/>
        </authorList>
    </citation>
    <scope>NUCLEOTIDE SEQUENCE [MRNA]</scope>
    <scope>PROTEIN SEQUENCE OF 26-40; 45-66 AND 140-145</scope>
    <source>
        <strain>1132D</strain>
    </source>
</reference>
<evidence type="ECO:0000255" key="1">
    <source>
        <dbReference type="PROSITE-ProRule" id="PRU00448"/>
    </source>
</evidence>
<protein>
    <recommendedName>
        <fullName>Dynein 18 kDa light chain, flagellar outer arm</fullName>
    </recommendedName>
</protein>
<accession>Q39584</accession>
<sequence length="159" mass="17788">MAAKVDIFAANLPNLTDEEMDMCRKAFAMFDKDGSGTIDTKELRTALSALGQNPTEEDMFVMISQVDQDGSRCIEFKEFVRVIQINKQMSAKDADEADTLDAFVALGGNLDKTGRILVDKLRSICEEFELTVNVDRLVKDADRDLNGFLSYDEFRALLS</sequence>
<keyword id="KW-0002">3D-structure</keyword>
<keyword id="KW-0106">Calcium</keyword>
<keyword id="KW-0966">Cell projection</keyword>
<keyword id="KW-0969">Cilium</keyword>
<keyword id="KW-0903">Direct protein sequencing</keyword>
<keyword id="KW-0243">Dynein</keyword>
<keyword id="KW-0282">Flagellum</keyword>
<keyword id="KW-0479">Metal-binding</keyword>
<keyword id="KW-0493">Microtubule</keyword>
<keyword id="KW-0505">Motor protein</keyword>
<keyword id="KW-0677">Repeat</keyword>
<name>DYL3_CHLRE</name>